<feature type="signal peptide" evidence="1">
    <location>
        <begin position="1"/>
        <end position="18"/>
    </location>
</feature>
<feature type="chain" id="PRO_0000001007" description="Alpha-galactosidase">
    <location>
        <begin position="19"/>
        <end position="471"/>
    </location>
</feature>
<feature type="active site" description="Nucleophile" evidence="1">
    <location>
        <position position="149"/>
    </location>
</feature>
<feature type="active site" description="Proton donor" evidence="1">
    <location>
        <position position="209"/>
    </location>
</feature>
<feature type="binding site" evidence="1">
    <location>
        <position position="72"/>
    </location>
    <ligand>
        <name>substrate</name>
    </ligand>
</feature>
<feature type="binding site" evidence="1">
    <location>
        <position position="73"/>
    </location>
    <ligand>
        <name>substrate</name>
    </ligand>
</feature>
<feature type="binding site" evidence="1">
    <location>
        <position position="147"/>
    </location>
    <ligand>
        <name>substrate</name>
    </ligand>
</feature>
<feature type="binding site" evidence="1">
    <location>
        <position position="205"/>
    </location>
    <ligand>
        <name>substrate</name>
    </ligand>
</feature>
<feature type="binding site" evidence="1">
    <location>
        <position position="251"/>
    </location>
    <ligand>
        <name>substrate</name>
    </ligand>
</feature>
<feature type="glycosylation site" description="N-linked (GlcNAc...) asparagine" evidence="2">
    <location>
        <position position="82"/>
    </location>
</feature>
<feature type="glycosylation site" description="N-linked (GlcNAc...) asparagine" evidence="2">
    <location>
        <position position="175"/>
    </location>
</feature>
<feature type="glycosylation site" description="N-linked (GlcNAc...) asparagine" evidence="2">
    <location>
        <position position="270"/>
    </location>
</feature>
<feature type="glycosylation site" description="N-linked (GlcNAc...) asparagine" evidence="2">
    <location>
        <position position="361"/>
    </location>
</feature>
<feature type="glycosylation site" description="N-linked (GlcNAc...) asparagine" evidence="2">
    <location>
        <position position="370"/>
    </location>
</feature>
<feature type="glycosylation site" description="N-linked (GlcNAc...) asparagine" evidence="2">
    <location>
        <position position="417"/>
    </location>
</feature>
<feature type="glycosylation site" description="N-linked (GlcNAc...) asparagine" evidence="2">
    <location>
        <position position="422"/>
    </location>
</feature>
<feature type="glycosylation site" description="N-linked (GlcNAc...) asparagine" evidence="2">
    <location>
        <position position="435"/>
    </location>
</feature>
<feature type="glycosylation site" description="N-linked (GlcNAc...) asparagine" evidence="2">
    <location>
        <position position="454"/>
    </location>
</feature>
<feature type="disulfide bond" evidence="1">
    <location>
        <begin position="42"/>
        <end position="74"/>
    </location>
</feature>
<feature type="disulfide bond" evidence="1">
    <location>
        <begin position="121"/>
        <end position="151"/>
    </location>
</feature>
<feature type="disulfide bond" evidence="1">
    <location>
        <begin position="221"/>
        <end position="237"/>
    </location>
</feature>
<feature type="disulfide bond" evidence="1">
    <location>
        <begin position="223"/>
        <end position="230"/>
    </location>
</feature>
<proteinExistence type="inferred from homology"/>
<sequence>MSYIYLFITAAAVTGALGSSPSYNGLGLTPQMGWDNWNTFACDVSEQLLLNTADRISEIGLKDLGYKYVILDDCWSSGRNSNGTLVADKNKFPNGMDHVARHLHNNNFLFGMYSSAGEYTCAGYPGSLGHEQEDAEFFARNGVDYLKYDNCYNKGKFGTPETSYKRYKAMSDALNKTGRPIFYSLCNWGQDLTFYWGSDIANSWRMSGDIYPEFDRPDSRCPCDGDQYDCSYAGFHCSIMNILNKAAPMGQNAGIGGWNDLDNLEVGVGNLTDDEEKAHFSMWAMVKSPLIIGADVNHLKESSYSIYSQASVIAINQDPKGVPATRVWRHYVSQTDKYGKGEIQLWSCPLDNGDQVIALLNGSNKKRPMNASLEDIFFDSYLGSEELSSSWDIYDLWANRIDNTIASNILKNNKVTNSSLYNATELSYKEGLSKNDTRLFGVQIGTVSPGGLLNTTVPAHGVALYRLRRSR</sequence>
<organism>
    <name type="scientific">Saccharomyces mikatae</name>
    <name type="common">Yeast</name>
    <dbReference type="NCBI Taxonomy" id="114525"/>
    <lineage>
        <taxon>Eukaryota</taxon>
        <taxon>Fungi</taxon>
        <taxon>Dikarya</taxon>
        <taxon>Ascomycota</taxon>
        <taxon>Saccharomycotina</taxon>
        <taxon>Saccharomycetes</taxon>
        <taxon>Saccharomycetales</taxon>
        <taxon>Saccharomycetaceae</taxon>
        <taxon>Saccharomyces</taxon>
    </lineage>
</organism>
<reference key="1">
    <citation type="journal article" date="1996" name="Mol. Gen. Genet.">
        <title>Superfamily of alpha-galactosidase MEL genes of the Saccharomyces sensu stricto species complex.</title>
        <authorList>
            <person name="Naumova E.S."/>
            <person name="Turakainen H."/>
            <person name="Naumov G.I."/>
            <person name="Korhola M."/>
        </authorList>
    </citation>
    <scope>NUCLEOTIDE SEQUENCE [GENOMIC DNA]</scope>
    <source>
        <strain>NBRC 1816</strain>
    </source>
</reference>
<accession>Q11129</accession>
<dbReference type="EC" id="3.2.1.22"/>
<dbReference type="EMBL" id="X95506">
    <property type="protein sequence ID" value="CAA64760.1"/>
    <property type="molecule type" value="Genomic_DNA"/>
</dbReference>
<dbReference type="SMR" id="Q11129"/>
<dbReference type="CAZy" id="GH27">
    <property type="family name" value="Glycoside Hydrolase Family 27"/>
</dbReference>
<dbReference type="GlyCosmos" id="Q11129">
    <property type="glycosylation" value="9 sites, No reported glycans"/>
</dbReference>
<dbReference type="GO" id="GO:0005576">
    <property type="term" value="C:extracellular region"/>
    <property type="evidence" value="ECO:0007669"/>
    <property type="project" value="UniProtKB-SubCell"/>
</dbReference>
<dbReference type="GO" id="GO:0004557">
    <property type="term" value="F:alpha-galactosidase activity"/>
    <property type="evidence" value="ECO:0007669"/>
    <property type="project" value="UniProtKB-EC"/>
</dbReference>
<dbReference type="GO" id="GO:0005995">
    <property type="term" value="P:melibiose catabolic process"/>
    <property type="evidence" value="ECO:0007669"/>
    <property type="project" value="UniProtKB-ARBA"/>
</dbReference>
<dbReference type="CDD" id="cd14792">
    <property type="entry name" value="GH27"/>
    <property type="match status" value="1"/>
</dbReference>
<dbReference type="FunFam" id="3.20.20.70:FF:000202">
    <property type="entry name" value="Alpha-galactosidase"/>
    <property type="match status" value="1"/>
</dbReference>
<dbReference type="Gene3D" id="3.20.20.70">
    <property type="entry name" value="Aldolase class I"/>
    <property type="match status" value="1"/>
</dbReference>
<dbReference type="Gene3D" id="2.60.40.1180">
    <property type="entry name" value="Golgi alpha-mannosidase II"/>
    <property type="match status" value="1"/>
</dbReference>
<dbReference type="InterPro" id="IPR013785">
    <property type="entry name" value="Aldolase_TIM"/>
</dbReference>
<dbReference type="InterPro" id="IPR002241">
    <property type="entry name" value="Glyco_hydro_27"/>
</dbReference>
<dbReference type="InterPro" id="IPR000111">
    <property type="entry name" value="Glyco_hydro_27/36_CS"/>
</dbReference>
<dbReference type="InterPro" id="IPR013780">
    <property type="entry name" value="Glyco_hydro_b"/>
</dbReference>
<dbReference type="InterPro" id="IPR006215">
    <property type="entry name" value="Glyco_hydro_melibiase"/>
</dbReference>
<dbReference type="InterPro" id="IPR017853">
    <property type="entry name" value="Glycoside_hydrolase_SF"/>
</dbReference>
<dbReference type="InterPro" id="IPR041233">
    <property type="entry name" value="Melibiase_C"/>
</dbReference>
<dbReference type="PANTHER" id="PTHR11452:SF75">
    <property type="entry name" value="ALPHA-GALACTOSIDASE MEL1"/>
    <property type="match status" value="1"/>
</dbReference>
<dbReference type="PANTHER" id="PTHR11452">
    <property type="entry name" value="ALPHA-GALACTOSIDASE/ALPHA-N-ACETYLGALACTOSAMINIDASE"/>
    <property type="match status" value="1"/>
</dbReference>
<dbReference type="Pfam" id="PF16499">
    <property type="entry name" value="Melibiase_2"/>
    <property type="match status" value="1"/>
</dbReference>
<dbReference type="Pfam" id="PF17801">
    <property type="entry name" value="Melibiase_C"/>
    <property type="match status" value="1"/>
</dbReference>
<dbReference type="PRINTS" id="PR00740">
    <property type="entry name" value="GLHYDRLASE27"/>
</dbReference>
<dbReference type="PRINTS" id="PR00748">
    <property type="entry name" value="MELIBIASE"/>
</dbReference>
<dbReference type="SUPFAM" id="SSF51445">
    <property type="entry name" value="(Trans)glycosidases"/>
    <property type="match status" value="1"/>
</dbReference>
<dbReference type="SUPFAM" id="SSF51011">
    <property type="entry name" value="Glycosyl hydrolase domain"/>
    <property type="match status" value="1"/>
</dbReference>
<dbReference type="PROSITE" id="PS00512">
    <property type="entry name" value="ALPHA_GALACTOSIDASE"/>
    <property type="match status" value="1"/>
</dbReference>
<protein>
    <recommendedName>
        <fullName>Alpha-galactosidase</fullName>
        <ecNumber>3.2.1.22</ecNumber>
    </recommendedName>
    <alternativeName>
        <fullName>Alpha-D-galactoside galactohydrolase</fullName>
    </alternativeName>
    <alternativeName>
        <fullName>MELj</fullName>
    </alternativeName>
    <alternativeName>
        <fullName>Melibiase</fullName>
    </alternativeName>
</protein>
<keyword id="KW-1015">Disulfide bond</keyword>
<keyword id="KW-0325">Glycoprotein</keyword>
<keyword id="KW-0326">Glycosidase</keyword>
<keyword id="KW-0378">Hydrolase</keyword>
<keyword id="KW-0964">Secreted</keyword>
<keyword id="KW-0732">Signal</keyword>
<name>MEL_SACMI</name>
<comment type="catalytic activity">
    <reaction>
        <text>Hydrolysis of terminal, non-reducing alpha-D-galactose residues in alpha-D-galactosides, including galactose oligosaccharides, galactomannans and galactolipids.</text>
        <dbReference type="EC" id="3.2.1.22"/>
    </reaction>
</comment>
<comment type="subunit">
    <text evidence="1">Homotetramer.</text>
</comment>
<comment type="subcellular location">
    <subcellularLocation>
        <location evidence="1">Secreted</location>
    </subcellularLocation>
</comment>
<comment type="similarity">
    <text evidence="3">Belongs to the glycosyl hydrolase 27 family.</text>
</comment>
<evidence type="ECO:0000250" key="1"/>
<evidence type="ECO:0000255" key="2"/>
<evidence type="ECO:0000305" key="3"/>
<gene>
    <name type="primary">MEL</name>
</gene>